<dbReference type="EMBL" id="CP000817">
    <property type="protein sequence ID" value="ACA41525.1"/>
    <property type="molecule type" value="Genomic_DNA"/>
</dbReference>
<dbReference type="RefSeq" id="WP_012295566.1">
    <property type="nucleotide sequence ID" value="NC_010382.1"/>
</dbReference>
<dbReference type="SMR" id="B1HW86"/>
<dbReference type="EnsemblBacteria" id="ACA41525">
    <property type="protein sequence ID" value="ACA41525"/>
    <property type="gene ID" value="Bsph_4057"/>
</dbReference>
<dbReference type="KEGG" id="lsp:Bsph_4057"/>
<dbReference type="HOGENOM" id="CLU_014841_3_2_9"/>
<dbReference type="Proteomes" id="UP000002164">
    <property type="component" value="Chromosome"/>
</dbReference>
<dbReference type="GO" id="GO:0005737">
    <property type="term" value="C:cytoplasm"/>
    <property type="evidence" value="ECO:0007669"/>
    <property type="project" value="UniProtKB-SubCell"/>
</dbReference>
<dbReference type="GO" id="GO:0009380">
    <property type="term" value="C:excinuclease repair complex"/>
    <property type="evidence" value="ECO:0007669"/>
    <property type="project" value="InterPro"/>
</dbReference>
<dbReference type="GO" id="GO:0003677">
    <property type="term" value="F:DNA binding"/>
    <property type="evidence" value="ECO:0007669"/>
    <property type="project" value="UniProtKB-UniRule"/>
</dbReference>
<dbReference type="GO" id="GO:0009381">
    <property type="term" value="F:excinuclease ABC activity"/>
    <property type="evidence" value="ECO:0007669"/>
    <property type="project" value="UniProtKB-UniRule"/>
</dbReference>
<dbReference type="GO" id="GO:0006289">
    <property type="term" value="P:nucleotide-excision repair"/>
    <property type="evidence" value="ECO:0007669"/>
    <property type="project" value="UniProtKB-UniRule"/>
</dbReference>
<dbReference type="GO" id="GO:0009432">
    <property type="term" value="P:SOS response"/>
    <property type="evidence" value="ECO:0007669"/>
    <property type="project" value="UniProtKB-UniRule"/>
</dbReference>
<dbReference type="CDD" id="cd10434">
    <property type="entry name" value="GIY-YIG_UvrC_Cho"/>
    <property type="match status" value="1"/>
</dbReference>
<dbReference type="FunFam" id="3.30.420.340:FF:000002">
    <property type="entry name" value="UvrABC system protein C"/>
    <property type="match status" value="1"/>
</dbReference>
<dbReference type="FunFam" id="3.40.1440.10:FF:000001">
    <property type="entry name" value="UvrABC system protein C"/>
    <property type="match status" value="1"/>
</dbReference>
<dbReference type="Gene3D" id="1.10.150.20">
    <property type="entry name" value="5' to 3' exonuclease, C-terminal subdomain"/>
    <property type="match status" value="1"/>
</dbReference>
<dbReference type="Gene3D" id="3.40.1440.10">
    <property type="entry name" value="GIY-YIG endonuclease"/>
    <property type="match status" value="1"/>
</dbReference>
<dbReference type="Gene3D" id="4.10.860.10">
    <property type="entry name" value="UVR domain"/>
    <property type="match status" value="1"/>
</dbReference>
<dbReference type="Gene3D" id="3.30.420.340">
    <property type="entry name" value="UvrC, RNAse H endonuclease domain"/>
    <property type="match status" value="1"/>
</dbReference>
<dbReference type="HAMAP" id="MF_00203">
    <property type="entry name" value="UvrC"/>
    <property type="match status" value="1"/>
</dbReference>
<dbReference type="InterPro" id="IPR000305">
    <property type="entry name" value="GIY-YIG_endonuc"/>
</dbReference>
<dbReference type="InterPro" id="IPR035901">
    <property type="entry name" value="GIY-YIG_endonuc_sf"/>
</dbReference>
<dbReference type="InterPro" id="IPR047296">
    <property type="entry name" value="GIY-YIG_UvrC_Cho"/>
</dbReference>
<dbReference type="InterPro" id="IPR010994">
    <property type="entry name" value="RuvA_2-like"/>
</dbReference>
<dbReference type="InterPro" id="IPR001943">
    <property type="entry name" value="UVR_dom"/>
</dbReference>
<dbReference type="InterPro" id="IPR036876">
    <property type="entry name" value="UVR_dom_sf"/>
</dbReference>
<dbReference type="InterPro" id="IPR050066">
    <property type="entry name" value="UvrABC_protein_C"/>
</dbReference>
<dbReference type="InterPro" id="IPR004791">
    <property type="entry name" value="UvrC"/>
</dbReference>
<dbReference type="InterPro" id="IPR001162">
    <property type="entry name" value="UvrC_RNase_H_dom"/>
</dbReference>
<dbReference type="InterPro" id="IPR038476">
    <property type="entry name" value="UvrC_RNase_H_dom_sf"/>
</dbReference>
<dbReference type="NCBIfam" id="TIGR00194">
    <property type="entry name" value="uvrC"/>
    <property type="match status" value="1"/>
</dbReference>
<dbReference type="PANTHER" id="PTHR30562:SF1">
    <property type="entry name" value="UVRABC SYSTEM PROTEIN C"/>
    <property type="match status" value="1"/>
</dbReference>
<dbReference type="PANTHER" id="PTHR30562">
    <property type="entry name" value="UVRC/OXIDOREDUCTASE"/>
    <property type="match status" value="1"/>
</dbReference>
<dbReference type="Pfam" id="PF01541">
    <property type="entry name" value="GIY-YIG"/>
    <property type="match status" value="1"/>
</dbReference>
<dbReference type="Pfam" id="PF02151">
    <property type="entry name" value="UVR"/>
    <property type="match status" value="1"/>
</dbReference>
<dbReference type="Pfam" id="PF22920">
    <property type="entry name" value="UvrC_RNaseH"/>
    <property type="match status" value="1"/>
</dbReference>
<dbReference type="Pfam" id="PF08459">
    <property type="entry name" value="UvrC_RNaseH_dom"/>
    <property type="match status" value="1"/>
</dbReference>
<dbReference type="SMART" id="SM00465">
    <property type="entry name" value="GIYc"/>
    <property type="match status" value="1"/>
</dbReference>
<dbReference type="SUPFAM" id="SSF46600">
    <property type="entry name" value="C-terminal UvrC-binding domain of UvrB"/>
    <property type="match status" value="1"/>
</dbReference>
<dbReference type="SUPFAM" id="SSF82771">
    <property type="entry name" value="GIY-YIG endonuclease"/>
    <property type="match status" value="1"/>
</dbReference>
<dbReference type="SUPFAM" id="SSF47781">
    <property type="entry name" value="RuvA domain 2-like"/>
    <property type="match status" value="1"/>
</dbReference>
<dbReference type="PROSITE" id="PS50164">
    <property type="entry name" value="GIY_YIG"/>
    <property type="match status" value="1"/>
</dbReference>
<dbReference type="PROSITE" id="PS50151">
    <property type="entry name" value="UVR"/>
    <property type="match status" value="1"/>
</dbReference>
<dbReference type="PROSITE" id="PS50165">
    <property type="entry name" value="UVRC"/>
    <property type="match status" value="1"/>
</dbReference>
<reference key="1">
    <citation type="journal article" date="2008" name="J. Bacteriol.">
        <title>Complete genome sequence of the mosquitocidal bacterium Bacillus sphaericus C3-41 and comparison with those of closely related Bacillus species.</title>
        <authorList>
            <person name="Hu X."/>
            <person name="Fan W."/>
            <person name="Han B."/>
            <person name="Liu H."/>
            <person name="Zheng D."/>
            <person name="Li Q."/>
            <person name="Dong W."/>
            <person name="Yan J."/>
            <person name="Gao M."/>
            <person name="Berry C."/>
            <person name="Yuan Z."/>
        </authorList>
    </citation>
    <scope>NUCLEOTIDE SEQUENCE [LARGE SCALE GENOMIC DNA]</scope>
    <source>
        <strain>C3-41</strain>
    </source>
</reference>
<organism>
    <name type="scientific">Lysinibacillus sphaericus (strain C3-41)</name>
    <dbReference type="NCBI Taxonomy" id="444177"/>
    <lineage>
        <taxon>Bacteria</taxon>
        <taxon>Bacillati</taxon>
        <taxon>Bacillota</taxon>
        <taxon>Bacilli</taxon>
        <taxon>Bacillales</taxon>
        <taxon>Bacillaceae</taxon>
        <taxon>Lysinibacillus</taxon>
    </lineage>
</organism>
<keyword id="KW-0963">Cytoplasm</keyword>
<keyword id="KW-0227">DNA damage</keyword>
<keyword id="KW-0228">DNA excision</keyword>
<keyword id="KW-0234">DNA repair</keyword>
<keyword id="KW-0267">Excision nuclease</keyword>
<keyword id="KW-0742">SOS response</keyword>
<feature type="chain" id="PRO_1000099500" description="UvrABC system protein C">
    <location>
        <begin position="1"/>
        <end position="596"/>
    </location>
</feature>
<feature type="domain" description="GIY-YIG" evidence="1">
    <location>
        <begin position="14"/>
        <end position="91"/>
    </location>
</feature>
<feature type="domain" description="UVR" evidence="1">
    <location>
        <begin position="196"/>
        <end position="231"/>
    </location>
</feature>
<sequence length="596" mass="68108">MNDLIKRKLDILPDQPGCYLMKDRQGTIIYVGKAKVLKNRVRSYFTGTHEGKTQRLVSEIEDFEYIVTSSNIEALILELNLIKLHDPKYNVMLTDDKTYPYLKITNEKHPRLITTRKVKKDKAKYFGPYPNAYAASETKKLLDRLYPLRKCVQLPSKVCLYYHMGQCIAPCVKEIEGHVYQEMIEDMTKFLNGGVEAVKKELEVKMLAAAENLEFERAKEFRDQIAHIDTVMQKQKIVSSDTTNRDVFGYAVEKGWMCVQVFFVRQGKLIERDVSIFPIYQDPEEEFLTFVGRFYEKPEHIKPKEVFIPQAIDGAILTELLGIKVLTPKRGQKKELVDLATKNAEIAVAAKFQLIERQEERTIGACEALGDAMGITTPLRIEAFDNSHMHGTDAVSAMVVFIDGKPAKKEYRKYKTRTAAKHDDYGAMQEVIRRRYIRVLKEGLPLPDLVLIDGGKGQMEVAREVLEDELGLVIPIAGLAKDDKHNTSQLLFGDPPEVIALKRTSDGFYLLQRIQDEVHRFAITFLRQQHEKHAIQSVLDQIEGVGPKRKQQLLKHFGSVKKIREASELALQEAGMPANLASHIYAYFQQESLSKE</sequence>
<accession>B1HW86</accession>
<evidence type="ECO:0000255" key="1">
    <source>
        <dbReference type="HAMAP-Rule" id="MF_00203"/>
    </source>
</evidence>
<name>UVRC_LYSSC</name>
<protein>
    <recommendedName>
        <fullName evidence="1">UvrABC system protein C</fullName>
        <shortName evidence="1">Protein UvrC</shortName>
    </recommendedName>
    <alternativeName>
        <fullName evidence="1">Excinuclease ABC subunit C</fullName>
    </alternativeName>
</protein>
<gene>
    <name evidence="1" type="primary">uvrC</name>
    <name type="ordered locus">Bsph_4057</name>
</gene>
<comment type="function">
    <text evidence="1">The UvrABC repair system catalyzes the recognition and processing of DNA lesions. UvrC both incises the 5' and 3' sides of the lesion. The N-terminal half is responsible for the 3' incision and the C-terminal half is responsible for the 5' incision.</text>
</comment>
<comment type="subunit">
    <text evidence="1">Interacts with UvrB in an incision complex.</text>
</comment>
<comment type="subcellular location">
    <subcellularLocation>
        <location evidence="1">Cytoplasm</location>
    </subcellularLocation>
</comment>
<comment type="similarity">
    <text evidence="1">Belongs to the UvrC family.</text>
</comment>
<proteinExistence type="inferred from homology"/>